<organism>
    <name type="scientific">Kluyveromyces lactis (strain ATCC 8585 / CBS 2359 / DSM 70799 / NBRC 1267 / NRRL Y-1140 / WM37)</name>
    <name type="common">Yeast</name>
    <name type="synonym">Candida sphaerica</name>
    <dbReference type="NCBI Taxonomy" id="284590"/>
    <lineage>
        <taxon>Eukaryota</taxon>
        <taxon>Fungi</taxon>
        <taxon>Dikarya</taxon>
        <taxon>Ascomycota</taxon>
        <taxon>Saccharomycotina</taxon>
        <taxon>Saccharomycetes</taxon>
        <taxon>Saccharomycetales</taxon>
        <taxon>Saccharomycetaceae</taxon>
        <taxon>Kluyveromyces</taxon>
    </lineage>
</organism>
<keyword id="KW-0067">ATP-binding</keyword>
<keyword id="KW-0143">Chaperone</keyword>
<keyword id="KW-0963">Cytoplasm</keyword>
<keyword id="KW-0460">Magnesium</keyword>
<keyword id="KW-0479">Metal-binding</keyword>
<keyword id="KW-0547">Nucleotide-binding</keyword>
<keyword id="KW-1185">Reference proteome</keyword>
<evidence type="ECO:0000250" key="1">
    <source>
        <dbReference type="UniProtKB" id="O75794"/>
    </source>
</evidence>
<evidence type="ECO:0000250" key="2">
    <source>
        <dbReference type="UniProtKB" id="Q05791"/>
    </source>
</evidence>
<evidence type="ECO:0000250" key="3">
    <source>
        <dbReference type="UniProtKB" id="Q9P7N5"/>
    </source>
</evidence>
<evidence type="ECO:0000256" key="4">
    <source>
        <dbReference type="SAM" id="MobiDB-lite"/>
    </source>
</evidence>
<evidence type="ECO:0000305" key="5"/>
<feature type="chain" id="PRO_0000350944" description="Translation initiation factor eIF2 assembly protein">
    <location>
        <begin position="1"/>
        <end position="366"/>
    </location>
</feature>
<feature type="region of interest" description="Disordered" evidence="4">
    <location>
        <begin position="79"/>
        <end position="108"/>
    </location>
</feature>
<feature type="compositionally biased region" description="Acidic residues" evidence="4">
    <location>
        <begin position="79"/>
        <end position="98"/>
    </location>
</feature>
<feature type="binding site" evidence="1">
    <location>
        <position position="133"/>
    </location>
    <ligand>
        <name>ATP</name>
        <dbReference type="ChEBI" id="CHEBI:30616"/>
    </ligand>
</feature>
<feature type="binding site" evidence="1">
    <location>
        <position position="136"/>
    </location>
    <ligand>
        <name>ATP</name>
        <dbReference type="ChEBI" id="CHEBI:30616"/>
    </ligand>
</feature>
<feature type="binding site" evidence="1">
    <location>
        <position position="138"/>
    </location>
    <ligand>
        <name>ATP</name>
        <dbReference type="ChEBI" id="CHEBI:30616"/>
    </ligand>
</feature>
<feature type="binding site" evidence="3">
    <location>
        <position position="140"/>
    </location>
    <ligand>
        <name>ATP</name>
        <dbReference type="ChEBI" id="CHEBI:30616"/>
    </ligand>
</feature>
<feature type="binding site" evidence="3">
    <location>
        <position position="198"/>
    </location>
    <ligand>
        <name>ATP</name>
        <dbReference type="ChEBI" id="CHEBI:30616"/>
    </ligand>
</feature>
<feature type="binding site" evidence="1">
    <location>
        <position position="199"/>
    </location>
    <ligand>
        <name>ATP</name>
        <dbReference type="ChEBI" id="CHEBI:30616"/>
    </ligand>
</feature>
<feature type="binding site" evidence="3">
    <location>
        <position position="200"/>
    </location>
    <ligand>
        <name>ATP</name>
        <dbReference type="ChEBI" id="CHEBI:30616"/>
    </ligand>
</feature>
<feature type="binding site" evidence="3">
    <location>
        <position position="201"/>
    </location>
    <ligand>
        <name>ATP</name>
        <dbReference type="ChEBI" id="CHEBI:30616"/>
    </ligand>
</feature>
<feature type="binding site" evidence="1">
    <location>
        <position position="208"/>
    </location>
    <ligand>
        <name>ATP</name>
        <dbReference type="ChEBI" id="CHEBI:30616"/>
    </ligand>
</feature>
<feature type="binding site" evidence="1">
    <location>
        <position position="210"/>
    </location>
    <ligand>
        <name>ATP</name>
        <dbReference type="ChEBI" id="CHEBI:30616"/>
    </ligand>
</feature>
<feature type="binding site" evidence="1">
    <location>
        <position position="224"/>
    </location>
    <ligand>
        <name>ATP</name>
        <dbReference type="ChEBI" id="CHEBI:30616"/>
    </ligand>
</feature>
<feature type="binding site" evidence="3">
    <location>
        <position position="263"/>
    </location>
    <ligand>
        <name>ATP</name>
        <dbReference type="ChEBI" id="CHEBI:30616"/>
    </ligand>
</feature>
<feature type="binding site" evidence="1">
    <location>
        <position position="277"/>
    </location>
    <ligand>
        <name>ATP</name>
        <dbReference type="ChEBI" id="CHEBI:30616"/>
    </ligand>
</feature>
<feature type="binding site" evidence="1">
    <location>
        <position position="277"/>
    </location>
    <ligand>
        <name>Mg(2+)</name>
        <dbReference type="ChEBI" id="CHEBI:18420"/>
    </ligand>
</feature>
<feature type="binding site" evidence="1">
    <location>
        <position position="279"/>
    </location>
    <ligand>
        <name>ATP</name>
        <dbReference type="ChEBI" id="CHEBI:30616"/>
    </ligand>
</feature>
<feature type="binding site" evidence="1">
    <location>
        <position position="279"/>
    </location>
    <ligand>
        <name>Mg(2+)</name>
        <dbReference type="ChEBI" id="CHEBI:18420"/>
    </ligand>
</feature>
<reference key="1">
    <citation type="journal article" date="2004" name="Nature">
        <title>Genome evolution in yeasts.</title>
        <authorList>
            <person name="Dujon B."/>
            <person name="Sherman D."/>
            <person name="Fischer G."/>
            <person name="Durrens P."/>
            <person name="Casaregola S."/>
            <person name="Lafontaine I."/>
            <person name="de Montigny J."/>
            <person name="Marck C."/>
            <person name="Neuveglise C."/>
            <person name="Talla E."/>
            <person name="Goffard N."/>
            <person name="Frangeul L."/>
            <person name="Aigle M."/>
            <person name="Anthouard V."/>
            <person name="Babour A."/>
            <person name="Barbe V."/>
            <person name="Barnay S."/>
            <person name="Blanchin S."/>
            <person name="Beckerich J.-M."/>
            <person name="Beyne E."/>
            <person name="Bleykasten C."/>
            <person name="Boisrame A."/>
            <person name="Boyer J."/>
            <person name="Cattolico L."/>
            <person name="Confanioleri F."/>
            <person name="de Daruvar A."/>
            <person name="Despons L."/>
            <person name="Fabre E."/>
            <person name="Fairhead C."/>
            <person name="Ferry-Dumazet H."/>
            <person name="Groppi A."/>
            <person name="Hantraye F."/>
            <person name="Hennequin C."/>
            <person name="Jauniaux N."/>
            <person name="Joyet P."/>
            <person name="Kachouri R."/>
            <person name="Kerrest A."/>
            <person name="Koszul R."/>
            <person name="Lemaire M."/>
            <person name="Lesur I."/>
            <person name="Ma L."/>
            <person name="Muller H."/>
            <person name="Nicaud J.-M."/>
            <person name="Nikolski M."/>
            <person name="Oztas S."/>
            <person name="Ozier-Kalogeropoulos O."/>
            <person name="Pellenz S."/>
            <person name="Potier S."/>
            <person name="Richard G.-F."/>
            <person name="Straub M.-L."/>
            <person name="Suleau A."/>
            <person name="Swennen D."/>
            <person name="Tekaia F."/>
            <person name="Wesolowski-Louvel M."/>
            <person name="Westhof E."/>
            <person name="Wirth B."/>
            <person name="Zeniou-Meyer M."/>
            <person name="Zivanovic Y."/>
            <person name="Bolotin-Fukuhara M."/>
            <person name="Thierry A."/>
            <person name="Bouchier C."/>
            <person name="Caudron B."/>
            <person name="Scarpelli C."/>
            <person name="Gaillardin C."/>
            <person name="Weissenbach J."/>
            <person name="Wincker P."/>
            <person name="Souciet J.-L."/>
        </authorList>
    </citation>
    <scope>NUCLEOTIDE SEQUENCE [LARGE SCALE GENOMIC DNA]</scope>
    <source>
        <strain>ATCC 8585 / CBS 2359 / DSM 70799 / NBRC 1267 / NRRL Y-1140 / WM37</strain>
    </source>
</reference>
<gene>
    <name type="primary">CDC123</name>
    <name type="ordered locus">KLLA0F04972g</name>
</gene>
<comment type="function">
    <text evidence="2">ATP-dependent protein-folding chaperone for the eIF2 complex. Binds to the gamma subunit of the eIF2 complex which allows the subunit to assemble with the alpha and beta subunits.</text>
</comment>
<comment type="subcellular location">
    <subcellularLocation>
        <location evidence="2">Cytoplasm</location>
    </subcellularLocation>
</comment>
<comment type="similarity">
    <text evidence="5">Belongs to the CDC123 family.</text>
</comment>
<name>CD123_KLULA</name>
<accession>Q6CL84</accession>
<dbReference type="EMBL" id="CR382126">
    <property type="protein sequence ID" value="CAG98013.1"/>
    <property type="molecule type" value="Genomic_DNA"/>
</dbReference>
<dbReference type="RefSeq" id="XP_455305.1">
    <property type="nucleotide sequence ID" value="XM_455305.1"/>
</dbReference>
<dbReference type="SMR" id="Q6CL84"/>
<dbReference type="FunCoup" id="Q6CL84">
    <property type="interactions" value="792"/>
</dbReference>
<dbReference type="STRING" id="284590.Q6CL84"/>
<dbReference type="PaxDb" id="284590-Q6CL84"/>
<dbReference type="KEGG" id="kla:KLLA0_F04972g"/>
<dbReference type="eggNOG" id="KOG2983">
    <property type="taxonomic scope" value="Eukaryota"/>
</dbReference>
<dbReference type="HOGENOM" id="CLU_034402_2_0_1"/>
<dbReference type="InParanoid" id="Q6CL84"/>
<dbReference type="OMA" id="TFPDPNF"/>
<dbReference type="Proteomes" id="UP000000598">
    <property type="component" value="Chromosome F"/>
</dbReference>
<dbReference type="GO" id="GO:0005737">
    <property type="term" value="C:cytoplasm"/>
    <property type="evidence" value="ECO:0000250"/>
    <property type="project" value="UniProtKB"/>
</dbReference>
<dbReference type="GO" id="GO:0005524">
    <property type="term" value="F:ATP binding"/>
    <property type="evidence" value="ECO:0000250"/>
    <property type="project" value="UniProtKB"/>
</dbReference>
<dbReference type="GO" id="GO:0000287">
    <property type="term" value="F:magnesium ion binding"/>
    <property type="evidence" value="ECO:0000250"/>
    <property type="project" value="UniProtKB"/>
</dbReference>
<dbReference type="GO" id="GO:0044183">
    <property type="term" value="F:protein folding chaperone"/>
    <property type="evidence" value="ECO:0000250"/>
    <property type="project" value="UniProtKB"/>
</dbReference>
<dbReference type="GO" id="GO:1905143">
    <property type="term" value="P:eukaryotic translation initiation factor 2 complex assembly"/>
    <property type="evidence" value="ECO:0000250"/>
    <property type="project" value="UniProtKB"/>
</dbReference>
<dbReference type="InterPro" id="IPR009772">
    <property type="entry name" value="CDC123"/>
</dbReference>
<dbReference type="PANTHER" id="PTHR15323:SF6">
    <property type="entry name" value="CELL DIVISION CYCLE PROTEIN 123 HOMOLOG"/>
    <property type="match status" value="1"/>
</dbReference>
<dbReference type="PANTHER" id="PTHR15323">
    <property type="entry name" value="D123 PROTEIN"/>
    <property type="match status" value="1"/>
</dbReference>
<dbReference type="Pfam" id="PF07065">
    <property type="entry name" value="D123"/>
    <property type="match status" value="1"/>
</dbReference>
<dbReference type="PIRSF" id="PIRSF007807">
    <property type="entry name" value="Cdc123"/>
    <property type="match status" value="1"/>
</dbReference>
<sequence length="366" mass="42831">MAAESYTPLVDIKVRSDDIRACSFSSWYDKFKKYTPKAKIIQPLPEEFLRYLAQDGIRLSLEENDSTYNDHCLKRDDDNEYSDWEADDDGDNDSDSDDDKNGKEEEMVPMVNFPDLHREIAEVIGEYGAVTPKLNWSAPRDATWILPNNTSKCMNVNDIYLLLNASNYIAYDLDHAFDECEDRDNSDNQSIQFELVLRKWFDINPALEFRVFVRDSEIWGISQRDLNYYNYLEPLQDTFTNLIEEFVYDIVLPNFDLKSFVLDVYLPRPFESCWLIDINPWSRTTDPLLFSWNELASKDLDSDASPEIRLITEHNMGRFVTKEHSENQVPKDVVQASLDPESMRELTYKWKEILKMQEAESDSDSN</sequence>
<proteinExistence type="inferred from homology"/>
<protein>
    <recommendedName>
        <fullName evidence="5">Translation initiation factor eIF2 assembly protein</fullName>
    </recommendedName>
    <alternativeName>
        <fullName>Cell division cycle protein 123</fullName>
    </alternativeName>
</protein>